<organism>
    <name type="scientific">Homo sapiens</name>
    <name type="common">Human</name>
    <dbReference type="NCBI Taxonomy" id="9606"/>
    <lineage>
        <taxon>Eukaryota</taxon>
        <taxon>Metazoa</taxon>
        <taxon>Chordata</taxon>
        <taxon>Craniata</taxon>
        <taxon>Vertebrata</taxon>
        <taxon>Euteleostomi</taxon>
        <taxon>Mammalia</taxon>
        <taxon>Eutheria</taxon>
        <taxon>Euarchontoglires</taxon>
        <taxon>Primates</taxon>
        <taxon>Haplorrhini</taxon>
        <taxon>Catarrhini</taxon>
        <taxon>Hominidae</taxon>
        <taxon>Homo</taxon>
    </lineage>
</organism>
<proteinExistence type="uncertain"/>
<protein>
    <recommendedName>
        <fullName>Putative uncharacterized protein FLJ41423</fullName>
    </recommendedName>
</protein>
<feature type="chain" id="PRO_0000337745" description="Putative uncharacterized protein FLJ41423">
    <location>
        <begin position="1"/>
        <end position="167"/>
    </location>
</feature>
<feature type="region of interest" description="Disordered" evidence="1">
    <location>
        <begin position="148"/>
        <end position="167"/>
    </location>
</feature>
<feature type="sequence conflict" description="In Ref. 1; BAC85611." evidence="2" ref="1">
    <original>F</original>
    <variation>S</variation>
    <location>
        <position position="48"/>
    </location>
</feature>
<dbReference type="EMBL" id="AK123417">
    <property type="protein sequence ID" value="BAC85611.1"/>
    <property type="molecule type" value="mRNA"/>
</dbReference>
<dbReference type="EMBL" id="CH471064">
    <property type="protein sequence ID" value="EAW68041.1"/>
    <property type="molecule type" value="Genomic_DNA"/>
</dbReference>
<dbReference type="EMBL" id="BC130636">
    <property type="protein sequence ID" value="AAI30637.1"/>
    <property type="molecule type" value="mRNA"/>
</dbReference>
<dbReference type="EMBL" id="BC130638">
    <property type="protein sequence ID" value="AAI30639.1"/>
    <property type="molecule type" value="mRNA"/>
</dbReference>
<dbReference type="GlyGen" id="A1L4Q6">
    <property type="glycosylation" value="1 site"/>
</dbReference>
<dbReference type="iPTMnet" id="A1L4Q6"/>
<dbReference type="BioMuta" id="-"/>
<dbReference type="jPOST" id="A1L4Q6"/>
<dbReference type="AGR" id="HGNC:54187"/>
<dbReference type="neXtProt" id="NX_A1L4Q6"/>
<dbReference type="InParanoid" id="A1L4Q6"/>
<dbReference type="PAN-GO" id="A1L4Q6">
    <property type="GO annotations" value="0 GO annotations based on evolutionary models"/>
</dbReference>
<dbReference type="Pharos" id="A1L4Q6">
    <property type="development level" value="Tdark"/>
</dbReference>
<dbReference type="Proteomes" id="UP000005640">
    <property type="component" value="Unplaced"/>
</dbReference>
<dbReference type="RNAct" id="A1L4Q6">
    <property type="molecule type" value="protein"/>
</dbReference>
<sequence length="167" mass="18020">MAALSSRCPRSAAGPAYLQEAARSAHWASPPLVPLRTFQSSLFSSGSFHSREEEEEGVSLLRTALVGQGPVPLFLGSLFCAGCRQGPSVWSCGEPVPRRIWVTASVTPSPRQALHPCSDSLDILKALHLLPAAFSPFIWVQVFAEPSNKESRGENDGGEERESANIY</sequence>
<keyword id="KW-1185">Reference proteome</keyword>
<accession>A1L4Q6</accession>
<accession>Q6ZW93</accession>
<comment type="caution">
    <text evidence="2">Product of a dubious CDS prediction. May not code for a protein although there is some proteomics data to suggest the existence of a protein.</text>
</comment>
<evidence type="ECO:0000256" key="1">
    <source>
        <dbReference type="SAM" id="MobiDB-lite"/>
    </source>
</evidence>
<evidence type="ECO:0000305" key="2"/>
<name>YK033_HUMAN</name>
<reference key="1">
    <citation type="journal article" date="2004" name="Nat. Genet.">
        <title>Complete sequencing and characterization of 21,243 full-length human cDNAs.</title>
        <authorList>
            <person name="Ota T."/>
            <person name="Suzuki Y."/>
            <person name="Nishikawa T."/>
            <person name="Otsuki T."/>
            <person name="Sugiyama T."/>
            <person name="Irie R."/>
            <person name="Wakamatsu A."/>
            <person name="Hayashi K."/>
            <person name="Sato H."/>
            <person name="Nagai K."/>
            <person name="Kimura K."/>
            <person name="Makita H."/>
            <person name="Sekine M."/>
            <person name="Obayashi M."/>
            <person name="Nishi T."/>
            <person name="Shibahara T."/>
            <person name="Tanaka T."/>
            <person name="Ishii S."/>
            <person name="Yamamoto J."/>
            <person name="Saito K."/>
            <person name="Kawai Y."/>
            <person name="Isono Y."/>
            <person name="Nakamura Y."/>
            <person name="Nagahari K."/>
            <person name="Murakami K."/>
            <person name="Yasuda T."/>
            <person name="Iwayanagi T."/>
            <person name="Wagatsuma M."/>
            <person name="Shiratori A."/>
            <person name="Sudo H."/>
            <person name="Hosoiri T."/>
            <person name="Kaku Y."/>
            <person name="Kodaira H."/>
            <person name="Kondo H."/>
            <person name="Sugawara M."/>
            <person name="Takahashi M."/>
            <person name="Kanda K."/>
            <person name="Yokoi T."/>
            <person name="Furuya T."/>
            <person name="Kikkawa E."/>
            <person name="Omura Y."/>
            <person name="Abe K."/>
            <person name="Kamihara K."/>
            <person name="Katsuta N."/>
            <person name="Sato K."/>
            <person name="Tanikawa M."/>
            <person name="Yamazaki M."/>
            <person name="Ninomiya K."/>
            <person name="Ishibashi T."/>
            <person name="Yamashita H."/>
            <person name="Murakawa K."/>
            <person name="Fujimori K."/>
            <person name="Tanai H."/>
            <person name="Kimata M."/>
            <person name="Watanabe M."/>
            <person name="Hiraoka S."/>
            <person name="Chiba Y."/>
            <person name="Ishida S."/>
            <person name="Ono Y."/>
            <person name="Takiguchi S."/>
            <person name="Watanabe S."/>
            <person name="Yosida M."/>
            <person name="Hotuta T."/>
            <person name="Kusano J."/>
            <person name="Kanehori K."/>
            <person name="Takahashi-Fujii A."/>
            <person name="Hara H."/>
            <person name="Tanase T.-O."/>
            <person name="Nomura Y."/>
            <person name="Togiya S."/>
            <person name="Komai F."/>
            <person name="Hara R."/>
            <person name="Takeuchi K."/>
            <person name="Arita M."/>
            <person name="Imose N."/>
            <person name="Musashino K."/>
            <person name="Yuuki H."/>
            <person name="Oshima A."/>
            <person name="Sasaki N."/>
            <person name="Aotsuka S."/>
            <person name="Yoshikawa Y."/>
            <person name="Matsunawa H."/>
            <person name="Ichihara T."/>
            <person name="Shiohata N."/>
            <person name="Sano S."/>
            <person name="Moriya S."/>
            <person name="Momiyama H."/>
            <person name="Satoh N."/>
            <person name="Takami S."/>
            <person name="Terashima Y."/>
            <person name="Suzuki O."/>
            <person name="Nakagawa S."/>
            <person name="Senoh A."/>
            <person name="Mizoguchi H."/>
            <person name="Goto Y."/>
            <person name="Shimizu F."/>
            <person name="Wakebe H."/>
            <person name="Hishigaki H."/>
            <person name="Watanabe T."/>
            <person name="Sugiyama A."/>
            <person name="Takemoto M."/>
            <person name="Kawakami B."/>
            <person name="Yamazaki M."/>
            <person name="Watanabe K."/>
            <person name="Kumagai A."/>
            <person name="Itakura S."/>
            <person name="Fukuzumi Y."/>
            <person name="Fujimori Y."/>
            <person name="Komiyama M."/>
            <person name="Tashiro H."/>
            <person name="Tanigami A."/>
            <person name="Fujiwara T."/>
            <person name="Ono T."/>
            <person name="Yamada K."/>
            <person name="Fujii Y."/>
            <person name="Ozaki K."/>
            <person name="Hirao M."/>
            <person name="Ohmori Y."/>
            <person name="Kawabata A."/>
            <person name="Hikiji T."/>
            <person name="Kobatake N."/>
            <person name="Inagaki H."/>
            <person name="Ikema Y."/>
            <person name="Okamoto S."/>
            <person name="Okitani R."/>
            <person name="Kawakami T."/>
            <person name="Noguchi S."/>
            <person name="Itoh T."/>
            <person name="Shigeta K."/>
            <person name="Senba T."/>
            <person name="Matsumura K."/>
            <person name="Nakajima Y."/>
            <person name="Mizuno T."/>
            <person name="Morinaga M."/>
            <person name="Sasaki M."/>
            <person name="Togashi T."/>
            <person name="Oyama M."/>
            <person name="Hata H."/>
            <person name="Watanabe M."/>
            <person name="Komatsu T."/>
            <person name="Mizushima-Sugano J."/>
            <person name="Satoh T."/>
            <person name="Shirai Y."/>
            <person name="Takahashi Y."/>
            <person name="Nakagawa K."/>
            <person name="Okumura K."/>
            <person name="Nagase T."/>
            <person name="Nomura N."/>
            <person name="Kikuchi H."/>
            <person name="Masuho Y."/>
            <person name="Yamashita R."/>
            <person name="Nakai K."/>
            <person name="Yada T."/>
            <person name="Nakamura Y."/>
            <person name="Ohara O."/>
            <person name="Isogai T."/>
            <person name="Sugano S."/>
        </authorList>
    </citation>
    <scope>NUCLEOTIDE SEQUENCE [LARGE SCALE MRNA]</scope>
    <source>
        <tissue>Hippocampus</tissue>
    </source>
</reference>
<reference key="2">
    <citation type="submission" date="2005-09" db="EMBL/GenBank/DDBJ databases">
        <authorList>
            <person name="Mural R.J."/>
            <person name="Istrail S."/>
            <person name="Sutton G.G."/>
            <person name="Florea L."/>
            <person name="Halpern A.L."/>
            <person name="Mobarry C.M."/>
            <person name="Lippert R."/>
            <person name="Walenz B."/>
            <person name="Shatkay H."/>
            <person name="Dew I."/>
            <person name="Miller J.R."/>
            <person name="Flanigan M.J."/>
            <person name="Edwards N.J."/>
            <person name="Bolanos R."/>
            <person name="Fasulo D."/>
            <person name="Halldorsson B.V."/>
            <person name="Hannenhalli S."/>
            <person name="Turner R."/>
            <person name="Yooseph S."/>
            <person name="Lu F."/>
            <person name="Nusskern D.R."/>
            <person name="Shue B.C."/>
            <person name="Zheng X.H."/>
            <person name="Zhong F."/>
            <person name="Delcher A.L."/>
            <person name="Huson D.H."/>
            <person name="Kravitz S.A."/>
            <person name="Mouchard L."/>
            <person name="Reinert K."/>
            <person name="Remington K.A."/>
            <person name="Clark A.G."/>
            <person name="Waterman M.S."/>
            <person name="Eichler E.E."/>
            <person name="Adams M.D."/>
            <person name="Hunkapiller M.W."/>
            <person name="Myers E.W."/>
            <person name="Venter J.C."/>
        </authorList>
    </citation>
    <scope>NUCLEOTIDE SEQUENCE [LARGE SCALE GENOMIC DNA]</scope>
</reference>
<reference key="3">
    <citation type="journal article" date="2004" name="Genome Res.">
        <title>The status, quality, and expansion of the NIH full-length cDNA project: the Mammalian Gene Collection (MGC).</title>
        <authorList>
            <consortium name="The MGC Project Team"/>
        </authorList>
    </citation>
    <scope>NUCLEOTIDE SEQUENCE [LARGE SCALE MRNA]</scope>
    <source>
        <tissue>Brain</tissue>
    </source>
</reference>